<gene>
    <name evidence="1" type="primary">bioB</name>
    <name type="ordered locus">CYA_2658</name>
</gene>
<feature type="chain" id="PRO_0000381674" description="Biotin synthase">
    <location>
        <begin position="1"/>
        <end position="310"/>
    </location>
</feature>
<feature type="domain" description="Radical SAM core" evidence="2">
    <location>
        <begin position="34"/>
        <end position="262"/>
    </location>
</feature>
<feature type="binding site" evidence="1">
    <location>
        <position position="49"/>
    </location>
    <ligand>
        <name>[4Fe-4S] cluster</name>
        <dbReference type="ChEBI" id="CHEBI:49883"/>
        <note>4Fe-4S-S-AdoMet</note>
    </ligand>
</feature>
<feature type="binding site" evidence="1">
    <location>
        <position position="53"/>
    </location>
    <ligand>
        <name>[4Fe-4S] cluster</name>
        <dbReference type="ChEBI" id="CHEBI:49883"/>
        <note>4Fe-4S-S-AdoMet</note>
    </ligand>
</feature>
<feature type="binding site" evidence="1">
    <location>
        <position position="56"/>
    </location>
    <ligand>
        <name>[4Fe-4S] cluster</name>
        <dbReference type="ChEBI" id="CHEBI:49883"/>
        <note>4Fe-4S-S-AdoMet</note>
    </ligand>
</feature>
<feature type="binding site" evidence="1">
    <location>
        <position position="93"/>
    </location>
    <ligand>
        <name>[2Fe-2S] cluster</name>
        <dbReference type="ChEBI" id="CHEBI:190135"/>
    </ligand>
</feature>
<feature type="binding site" evidence="1">
    <location>
        <position position="125"/>
    </location>
    <ligand>
        <name>[2Fe-2S] cluster</name>
        <dbReference type="ChEBI" id="CHEBI:190135"/>
    </ligand>
</feature>
<feature type="binding site" evidence="1">
    <location>
        <position position="185"/>
    </location>
    <ligand>
        <name>[2Fe-2S] cluster</name>
        <dbReference type="ChEBI" id="CHEBI:190135"/>
    </ligand>
</feature>
<feature type="binding site" evidence="1">
    <location>
        <position position="257"/>
    </location>
    <ligand>
        <name>[2Fe-2S] cluster</name>
        <dbReference type="ChEBI" id="CHEBI:190135"/>
    </ligand>
</feature>
<organism>
    <name type="scientific">Synechococcus sp. (strain JA-3-3Ab)</name>
    <name type="common">Cyanobacteria bacterium Yellowstone A-Prime</name>
    <dbReference type="NCBI Taxonomy" id="321327"/>
    <lineage>
        <taxon>Bacteria</taxon>
        <taxon>Bacillati</taxon>
        <taxon>Cyanobacteriota</taxon>
        <taxon>Cyanophyceae</taxon>
        <taxon>Synechococcales</taxon>
        <taxon>Synechococcaceae</taxon>
        <taxon>Synechococcus</taxon>
    </lineage>
</organism>
<evidence type="ECO:0000255" key="1">
    <source>
        <dbReference type="HAMAP-Rule" id="MF_01694"/>
    </source>
</evidence>
<evidence type="ECO:0000255" key="2">
    <source>
        <dbReference type="PROSITE-ProRule" id="PRU01266"/>
    </source>
</evidence>
<comment type="function">
    <text evidence="1">Catalyzes the conversion of dethiobiotin (DTB) to biotin by the insertion of a sulfur atom into dethiobiotin via a radical-based mechanism.</text>
</comment>
<comment type="catalytic activity">
    <reaction evidence="1">
        <text>(4R,5S)-dethiobiotin + (sulfur carrier)-SH + 2 reduced [2Fe-2S]-[ferredoxin] + 2 S-adenosyl-L-methionine = (sulfur carrier)-H + biotin + 2 5'-deoxyadenosine + 2 L-methionine + 2 oxidized [2Fe-2S]-[ferredoxin]</text>
        <dbReference type="Rhea" id="RHEA:22060"/>
        <dbReference type="Rhea" id="RHEA-COMP:10000"/>
        <dbReference type="Rhea" id="RHEA-COMP:10001"/>
        <dbReference type="Rhea" id="RHEA-COMP:14737"/>
        <dbReference type="Rhea" id="RHEA-COMP:14739"/>
        <dbReference type="ChEBI" id="CHEBI:17319"/>
        <dbReference type="ChEBI" id="CHEBI:29917"/>
        <dbReference type="ChEBI" id="CHEBI:33737"/>
        <dbReference type="ChEBI" id="CHEBI:33738"/>
        <dbReference type="ChEBI" id="CHEBI:57586"/>
        <dbReference type="ChEBI" id="CHEBI:57844"/>
        <dbReference type="ChEBI" id="CHEBI:59789"/>
        <dbReference type="ChEBI" id="CHEBI:64428"/>
        <dbReference type="ChEBI" id="CHEBI:149473"/>
        <dbReference type="EC" id="2.8.1.6"/>
    </reaction>
</comment>
<comment type="cofactor">
    <cofactor evidence="1">
        <name>[4Fe-4S] cluster</name>
        <dbReference type="ChEBI" id="CHEBI:49883"/>
    </cofactor>
    <text evidence="1">Binds 1 [4Fe-4S] cluster. The cluster is coordinated with 3 cysteines and an exchangeable S-adenosyl-L-methionine.</text>
</comment>
<comment type="cofactor">
    <cofactor evidence="1">
        <name>[2Fe-2S] cluster</name>
        <dbReference type="ChEBI" id="CHEBI:190135"/>
    </cofactor>
    <text evidence="1">Binds 1 [2Fe-2S] cluster. The cluster is coordinated with 3 cysteines and 1 arginine.</text>
</comment>
<comment type="pathway">
    <text evidence="1">Cofactor biosynthesis; biotin biosynthesis; biotin from 7,8-diaminononanoate: step 2/2.</text>
</comment>
<comment type="subunit">
    <text evidence="1">Homodimer.</text>
</comment>
<comment type="similarity">
    <text evidence="1">Belongs to the radical SAM superfamily. Biotin synthase family.</text>
</comment>
<sequence>MAIALEYVREIYYRPLLQLVYEAQTVHRQHHPPGRVQLCALVNIKSGRCPEDCAYCPQSARYSTGIETYPLISLESLRQQAMAAQRAGATRLCMGAAWRSAPAGEAFERVLEMVRLVRKLGMEACVTLGMVSAAQAQQLAAAGLTAYNHNLDTSPAFYPRIITTRTYRDRLETLAHVAAAGLQICCGGIVGLGESDEDRIGLLHVLANLTPPPTSVPINALVPVAGTPLGQLPPPDPLLLVRTIATARLLLPTAQIRLSAGRKNLSESEQALCFLAGANSIFTGERLLTTPNPGQAADAALLEKLGLQPL</sequence>
<accession>Q2JRI4</accession>
<reference key="1">
    <citation type="journal article" date="2007" name="ISME J.">
        <title>Population level functional diversity in a microbial community revealed by comparative genomic and metagenomic analyses.</title>
        <authorList>
            <person name="Bhaya D."/>
            <person name="Grossman A.R."/>
            <person name="Steunou A.-S."/>
            <person name="Khuri N."/>
            <person name="Cohan F.M."/>
            <person name="Hamamura N."/>
            <person name="Melendrez M.C."/>
            <person name="Bateson M.M."/>
            <person name="Ward D.M."/>
            <person name="Heidelberg J.F."/>
        </authorList>
    </citation>
    <scope>NUCLEOTIDE SEQUENCE [LARGE SCALE GENOMIC DNA]</scope>
    <source>
        <strain>JA-3-3Ab</strain>
    </source>
</reference>
<keyword id="KW-0001">2Fe-2S</keyword>
<keyword id="KW-0004">4Fe-4S</keyword>
<keyword id="KW-0093">Biotin biosynthesis</keyword>
<keyword id="KW-0408">Iron</keyword>
<keyword id="KW-0411">Iron-sulfur</keyword>
<keyword id="KW-0479">Metal-binding</keyword>
<keyword id="KW-0949">S-adenosyl-L-methionine</keyword>
<keyword id="KW-0808">Transferase</keyword>
<name>BIOB_SYNJA</name>
<protein>
    <recommendedName>
        <fullName evidence="1">Biotin synthase</fullName>
        <ecNumber evidence="1">2.8.1.6</ecNumber>
    </recommendedName>
</protein>
<dbReference type="EC" id="2.8.1.6" evidence="1"/>
<dbReference type="EMBL" id="CP000239">
    <property type="protein sequence ID" value="ABD00770.1"/>
    <property type="molecule type" value="Genomic_DNA"/>
</dbReference>
<dbReference type="RefSeq" id="WP_011431441.1">
    <property type="nucleotide sequence ID" value="NC_007775.1"/>
</dbReference>
<dbReference type="SMR" id="Q2JRI4"/>
<dbReference type="STRING" id="321327.CYA_2658"/>
<dbReference type="KEGG" id="cya:CYA_2658"/>
<dbReference type="eggNOG" id="COG0502">
    <property type="taxonomic scope" value="Bacteria"/>
</dbReference>
<dbReference type="HOGENOM" id="CLU_033172_1_2_3"/>
<dbReference type="OrthoDB" id="9786826at2"/>
<dbReference type="UniPathway" id="UPA00078">
    <property type="reaction ID" value="UER00162"/>
</dbReference>
<dbReference type="Proteomes" id="UP000008818">
    <property type="component" value="Chromosome"/>
</dbReference>
<dbReference type="GO" id="GO:0051537">
    <property type="term" value="F:2 iron, 2 sulfur cluster binding"/>
    <property type="evidence" value="ECO:0007669"/>
    <property type="project" value="UniProtKB-KW"/>
</dbReference>
<dbReference type="GO" id="GO:0051539">
    <property type="term" value="F:4 iron, 4 sulfur cluster binding"/>
    <property type="evidence" value="ECO:0007669"/>
    <property type="project" value="UniProtKB-KW"/>
</dbReference>
<dbReference type="GO" id="GO:0004076">
    <property type="term" value="F:biotin synthase activity"/>
    <property type="evidence" value="ECO:0007669"/>
    <property type="project" value="UniProtKB-UniRule"/>
</dbReference>
<dbReference type="GO" id="GO:0005506">
    <property type="term" value="F:iron ion binding"/>
    <property type="evidence" value="ECO:0007669"/>
    <property type="project" value="UniProtKB-UniRule"/>
</dbReference>
<dbReference type="GO" id="GO:0009102">
    <property type="term" value="P:biotin biosynthetic process"/>
    <property type="evidence" value="ECO:0007669"/>
    <property type="project" value="UniProtKB-UniRule"/>
</dbReference>
<dbReference type="CDD" id="cd01335">
    <property type="entry name" value="Radical_SAM"/>
    <property type="match status" value="1"/>
</dbReference>
<dbReference type="Gene3D" id="3.20.20.70">
    <property type="entry name" value="Aldolase class I"/>
    <property type="match status" value="1"/>
</dbReference>
<dbReference type="HAMAP" id="MF_01694">
    <property type="entry name" value="BioB"/>
    <property type="match status" value="1"/>
</dbReference>
<dbReference type="InterPro" id="IPR013785">
    <property type="entry name" value="Aldolase_TIM"/>
</dbReference>
<dbReference type="InterPro" id="IPR010722">
    <property type="entry name" value="BATS_dom"/>
</dbReference>
<dbReference type="InterPro" id="IPR002684">
    <property type="entry name" value="Biotin_synth/BioAB"/>
</dbReference>
<dbReference type="InterPro" id="IPR024177">
    <property type="entry name" value="Biotin_synthase"/>
</dbReference>
<dbReference type="InterPro" id="IPR006638">
    <property type="entry name" value="Elp3/MiaA/NifB-like_rSAM"/>
</dbReference>
<dbReference type="InterPro" id="IPR007197">
    <property type="entry name" value="rSAM"/>
</dbReference>
<dbReference type="NCBIfam" id="TIGR00433">
    <property type="entry name" value="bioB"/>
    <property type="match status" value="1"/>
</dbReference>
<dbReference type="PANTHER" id="PTHR22976">
    <property type="entry name" value="BIOTIN SYNTHASE"/>
    <property type="match status" value="1"/>
</dbReference>
<dbReference type="PANTHER" id="PTHR22976:SF2">
    <property type="entry name" value="BIOTIN SYNTHASE, MITOCHONDRIAL"/>
    <property type="match status" value="1"/>
</dbReference>
<dbReference type="Pfam" id="PF06968">
    <property type="entry name" value="BATS"/>
    <property type="match status" value="1"/>
</dbReference>
<dbReference type="Pfam" id="PF04055">
    <property type="entry name" value="Radical_SAM"/>
    <property type="match status" value="1"/>
</dbReference>
<dbReference type="PIRSF" id="PIRSF001619">
    <property type="entry name" value="Biotin_synth"/>
    <property type="match status" value="1"/>
</dbReference>
<dbReference type="SFLD" id="SFLDG01060">
    <property type="entry name" value="BATS_domain_containing"/>
    <property type="match status" value="1"/>
</dbReference>
<dbReference type="SFLD" id="SFLDF00272">
    <property type="entry name" value="biotin_synthase"/>
    <property type="match status" value="1"/>
</dbReference>
<dbReference type="SMART" id="SM00876">
    <property type="entry name" value="BATS"/>
    <property type="match status" value="1"/>
</dbReference>
<dbReference type="SMART" id="SM00729">
    <property type="entry name" value="Elp3"/>
    <property type="match status" value="1"/>
</dbReference>
<dbReference type="SUPFAM" id="SSF102114">
    <property type="entry name" value="Radical SAM enzymes"/>
    <property type="match status" value="1"/>
</dbReference>
<dbReference type="PROSITE" id="PS51918">
    <property type="entry name" value="RADICAL_SAM"/>
    <property type="match status" value="1"/>
</dbReference>
<proteinExistence type="inferred from homology"/>